<dbReference type="EMBL" id="AK024275">
    <property type="protein sequence ID" value="BAB14870.1"/>
    <property type="molecule type" value="mRNA"/>
</dbReference>
<dbReference type="EMBL" id="DR001466">
    <property type="status" value="NOT_ANNOTATED_CDS"/>
    <property type="molecule type" value="mRNA"/>
</dbReference>
<dbReference type="EMBL" id="BX640959">
    <property type="protein sequence ID" value="CAE45978.1"/>
    <property type="molecule type" value="mRNA"/>
</dbReference>
<dbReference type="EMBL" id="AC009656">
    <property type="status" value="NOT_ANNOTATED_CDS"/>
    <property type="molecule type" value="Genomic_DNA"/>
</dbReference>
<dbReference type="EMBL" id="AC087277">
    <property type="status" value="NOT_ANNOTATED_CDS"/>
    <property type="molecule type" value="Genomic_DNA"/>
</dbReference>
<dbReference type="EMBL" id="CH471064">
    <property type="protein sequence ID" value="EAW68124.1"/>
    <property type="molecule type" value="Genomic_DNA"/>
</dbReference>
<dbReference type="EMBL" id="BC008922">
    <property type="protein sequence ID" value="AAH08922.1"/>
    <property type="molecule type" value="mRNA"/>
</dbReference>
<dbReference type="EMBL" id="BC125122">
    <property type="protein sequence ID" value="AAI25123.1"/>
    <property type="status" value="ALT_INIT"/>
    <property type="molecule type" value="mRNA"/>
</dbReference>
<dbReference type="CCDS" id="CCDS31463.1">
    <molecule id="Q6MZQ0-1"/>
</dbReference>
<dbReference type="CCDS" id="CCDS53617.1">
    <molecule id="Q6MZQ0-4"/>
</dbReference>
<dbReference type="RefSeq" id="NP_001153639.1">
    <molecule id="Q6MZQ0-1"/>
    <property type="nucleotide sequence ID" value="NM_001160167.2"/>
</dbReference>
<dbReference type="RefSeq" id="NP_001153640.1">
    <molecule id="Q6MZQ0-3"/>
    <property type="nucleotide sequence ID" value="NM_001160168.2"/>
</dbReference>
<dbReference type="RefSeq" id="NP_001153641.1">
    <molecule id="Q6MZQ0-4"/>
    <property type="nucleotide sequence ID" value="NM_001160169.1"/>
</dbReference>
<dbReference type="RefSeq" id="NP_079117.3">
    <molecule id="Q6MZQ0-1"/>
    <property type="nucleotide sequence ID" value="NM_024841.4"/>
</dbReference>
<dbReference type="BioGRID" id="122983">
    <property type="interactions" value="23"/>
</dbReference>
<dbReference type="CORUM" id="Q6MZQ0"/>
<dbReference type="FunCoup" id="Q6MZQ0">
    <property type="interactions" value="190"/>
</dbReference>
<dbReference type="IntAct" id="Q6MZQ0">
    <property type="interactions" value="21"/>
</dbReference>
<dbReference type="STRING" id="9606.ENSP00000368144"/>
<dbReference type="iPTMnet" id="Q6MZQ0"/>
<dbReference type="PhosphoSitePlus" id="Q6MZQ0"/>
<dbReference type="BioMuta" id="PRR5L"/>
<dbReference type="DMDM" id="296452872"/>
<dbReference type="jPOST" id="Q6MZQ0"/>
<dbReference type="MassIVE" id="Q6MZQ0"/>
<dbReference type="PaxDb" id="9606-ENSP00000368144"/>
<dbReference type="PeptideAtlas" id="Q6MZQ0"/>
<dbReference type="ProteomicsDB" id="21616"/>
<dbReference type="ProteomicsDB" id="66581">
    <molecule id="Q6MZQ0-1"/>
</dbReference>
<dbReference type="ProteomicsDB" id="66582">
    <molecule id="Q6MZQ0-2"/>
</dbReference>
<dbReference type="ProteomicsDB" id="66583">
    <molecule id="Q6MZQ0-3"/>
</dbReference>
<dbReference type="Pumba" id="Q6MZQ0"/>
<dbReference type="Antibodypedia" id="13120">
    <property type="antibodies" value="77 antibodies from 25 providers"/>
</dbReference>
<dbReference type="DNASU" id="79899"/>
<dbReference type="Ensembl" id="ENST00000378867.7">
    <molecule id="Q6MZQ0-1"/>
    <property type="protein sequence ID" value="ENSP00000368144.3"/>
    <property type="gene ID" value="ENSG00000135362.14"/>
</dbReference>
<dbReference type="Ensembl" id="ENST00000527487.1">
    <molecule id="Q6MZQ0-4"/>
    <property type="protein sequence ID" value="ENSP00000435241.1"/>
    <property type="gene ID" value="ENSG00000135362.14"/>
</dbReference>
<dbReference type="Ensembl" id="ENST00000530639.6">
    <molecule id="Q6MZQ0-1"/>
    <property type="protein sequence ID" value="ENSP00000435050.1"/>
    <property type="gene ID" value="ENSG00000135362.14"/>
</dbReference>
<dbReference type="GeneID" id="79899"/>
<dbReference type="KEGG" id="hsa:79899"/>
<dbReference type="MANE-Select" id="ENST00000530639.6">
    <property type="protein sequence ID" value="ENSP00000435050.1"/>
    <property type="RefSeq nucleotide sequence ID" value="NM_001160167.2"/>
    <property type="RefSeq protein sequence ID" value="NP_001153639.1"/>
</dbReference>
<dbReference type="UCSC" id="uc001mwo.5">
    <molecule id="Q6MZQ0-1"/>
    <property type="organism name" value="human"/>
</dbReference>
<dbReference type="AGR" id="HGNC:25878"/>
<dbReference type="CTD" id="79899"/>
<dbReference type="DisGeNET" id="79899"/>
<dbReference type="GeneCards" id="PRR5L"/>
<dbReference type="HGNC" id="HGNC:25878">
    <property type="gene designation" value="PRR5L"/>
</dbReference>
<dbReference type="HPA" id="ENSG00000135362">
    <property type="expression patterns" value="Tissue enhanced (brain, intestine, lymphoid tissue)"/>
</dbReference>
<dbReference type="MIM" id="611728">
    <property type="type" value="gene"/>
</dbReference>
<dbReference type="neXtProt" id="NX_Q6MZQ0"/>
<dbReference type="OpenTargets" id="ENSG00000135362"/>
<dbReference type="PharmGKB" id="PA165543593"/>
<dbReference type="VEuPathDB" id="HostDB:ENSG00000135362"/>
<dbReference type="eggNOG" id="ENOG502QSM7">
    <property type="taxonomic scope" value="Eukaryota"/>
</dbReference>
<dbReference type="GeneTree" id="ENSGT00530000063981"/>
<dbReference type="HOGENOM" id="CLU_046146_1_0_1"/>
<dbReference type="InParanoid" id="Q6MZQ0"/>
<dbReference type="OMA" id="PFLGLCE"/>
<dbReference type="OrthoDB" id="2290221at2759"/>
<dbReference type="PAN-GO" id="Q6MZQ0">
    <property type="GO annotations" value="2 GO annotations based on evolutionary models"/>
</dbReference>
<dbReference type="PhylomeDB" id="Q6MZQ0"/>
<dbReference type="TreeFam" id="TF314826"/>
<dbReference type="PathwayCommons" id="Q6MZQ0"/>
<dbReference type="SignaLink" id="Q6MZQ0"/>
<dbReference type="SIGNOR" id="Q6MZQ0"/>
<dbReference type="BioGRID-ORCS" id="79899">
    <property type="hits" value="9 hits in 1147 CRISPR screens"/>
</dbReference>
<dbReference type="CD-CODE" id="232F8A39">
    <property type="entry name" value="P-body"/>
</dbReference>
<dbReference type="CD-CODE" id="DEE660B4">
    <property type="entry name" value="Stress granule"/>
</dbReference>
<dbReference type="ChiTaRS" id="PRR5L">
    <property type="organism name" value="human"/>
</dbReference>
<dbReference type="GenomeRNAi" id="79899"/>
<dbReference type="Pharos" id="Q6MZQ0">
    <property type="development level" value="Tbio"/>
</dbReference>
<dbReference type="PRO" id="PR:Q6MZQ0"/>
<dbReference type="Proteomes" id="UP000005640">
    <property type="component" value="Chromosome 11"/>
</dbReference>
<dbReference type="RNAct" id="Q6MZQ0">
    <property type="molecule type" value="protein"/>
</dbReference>
<dbReference type="Bgee" id="ENSG00000135362">
    <property type="expression patterns" value="Expressed in mucosa of transverse colon and 127 other cell types or tissues"/>
</dbReference>
<dbReference type="ExpressionAtlas" id="Q6MZQ0">
    <property type="expression patterns" value="baseline and differential"/>
</dbReference>
<dbReference type="GO" id="GO:0031932">
    <property type="term" value="C:TORC2 complex"/>
    <property type="evidence" value="ECO:0000314"/>
    <property type="project" value="UniProtKB"/>
</dbReference>
<dbReference type="GO" id="GO:0031625">
    <property type="term" value="F:ubiquitin protein ligase binding"/>
    <property type="evidence" value="ECO:0000353"/>
    <property type="project" value="UniProtKB"/>
</dbReference>
<dbReference type="GO" id="GO:0034599">
    <property type="term" value="P:cellular response to oxidative stress"/>
    <property type="evidence" value="ECO:0000315"/>
    <property type="project" value="UniProtKB"/>
</dbReference>
<dbReference type="GO" id="GO:0001933">
    <property type="term" value="P:negative regulation of protein phosphorylation"/>
    <property type="evidence" value="ECO:0000315"/>
    <property type="project" value="UniProtKB"/>
</dbReference>
<dbReference type="GO" id="GO:0009968">
    <property type="term" value="P:negative regulation of signal transduction"/>
    <property type="evidence" value="ECO:0007669"/>
    <property type="project" value="UniProtKB-KW"/>
</dbReference>
<dbReference type="GO" id="GO:0043491">
    <property type="term" value="P:phosphatidylinositol 3-kinase/protein kinase B signal transduction"/>
    <property type="evidence" value="ECO:0007669"/>
    <property type="project" value="Ensembl"/>
</dbReference>
<dbReference type="GO" id="GO:0090316">
    <property type="term" value="P:positive regulation of intracellular protein transport"/>
    <property type="evidence" value="ECO:0000315"/>
    <property type="project" value="UniProtKB"/>
</dbReference>
<dbReference type="GO" id="GO:0061014">
    <property type="term" value="P:positive regulation of mRNA catabolic process"/>
    <property type="evidence" value="ECO:0000315"/>
    <property type="project" value="UniProtKB"/>
</dbReference>
<dbReference type="GO" id="GO:0051897">
    <property type="term" value="P:positive regulation of phosphatidylinositol 3-kinase/protein kinase B signal transduction"/>
    <property type="evidence" value="ECO:0007669"/>
    <property type="project" value="Ensembl"/>
</dbReference>
<dbReference type="GO" id="GO:0010762">
    <property type="term" value="P:regulation of fibroblast migration"/>
    <property type="evidence" value="ECO:0000315"/>
    <property type="project" value="UniProtKB"/>
</dbReference>
<dbReference type="GO" id="GO:0038203">
    <property type="term" value="P:TORC2 signaling"/>
    <property type="evidence" value="ECO:0000314"/>
    <property type="project" value="UniProtKB"/>
</dbReference>
<dbReference type="InterPro" id="IPR013745">
    <property type="entry name" value="Bit61/PRR5"/>
</dbReference>
<dbReference type="PANTHER" id="PTHR32428:SF3">
    <property type="entry name" value="PROLINE-RICH PROTEIN 5-LIKE"/>
    <property type="match status" value="1"/>
</dbReference>
<dbReference type="PANTHER" id="PTHR32428">
    <property type="entry name" value="TARGET OF RAPAMYCIN COMPLEX 2 SUBUNIT BIT61-RELATED"/>
    <property type="match status" value="1"/>
</dbReference>
<dbReference type="Pfam" id="PF08539">
    <property type="entry name" value="HbrB"/>
    <property type="match status" value="1"/>
</dbReference>
<feature type="chain" id="PRO_0000332709" description="Proline-rich protein 5-like">
    <location>
        <begin position="1"/>
        <end position="368"/>
    </location>
</feature>
<feature type="region of interest" description="Disordered" evidence="2">
    <location>
        <begin position="327"/>
        <end position="368"/>
    </location>
</feature>
<feature type="compositionally biased region" description="Polar residues" evidence="2">
    <location>
        <begin position="335"/>
        <end position="344"/>
    </location>
</feature>
<feature type="compositionally biased region" description="Polar residues" evidence="2">
    <location>
        <begin position="357"/>
        <end position="368"/>
    </location>
</feature>
<feature type="modified residue" description="Phosphoserine" evidence="1">
    <location>
        <position position="28"/>
    </location>
</feature>
<feature type="splice variant" id="VSP_033375" description="In isoform 2." evidence="9">
    <location>
        <begin position="1"/>
        <end position="229"/>
    </location>
</feature>
<feature type="splice variant" id="VSP_033376" description="In isoform 3." evidence="8">
    <location>
        <begin position="1"/>
        <end position="81"/>
    </location>
</feature>
<feature type="splice variant" id="VSP_033377" description="In isoform 3." evidence="8">
    <original>R</original>
    <variation>M</variation>
    <location>
        <position position="82"/>
    </location>
</feature>
<feature type="splice variant" id="VSP_033378" description="In isoform 3." evidence="8">
    <location>
        <begin position="149"/>
        <end position="195"/>
    </location>
</feature>
<feature type="splice variant" id="VSP_044981" description="In isoform 4." evidence="10">
    <original>SVHEPTGPSE</original>
    <variation>PGGTPGSGPR</variation>
    <location>
        <begin position="196"/>
        <end position="205"/>
    </location>
</feature>
<feature type="splice variant" id="VSP_044982" description="In isoform 4." evidence="10">
    <location>
        <begin position="206"/>
        <end position="368"/>
    </location>
</feature>
<feature type="splice variant" id="VSP_033379" description="In isoform 2." evidence="9">
    <original>FSGPTYTL</original>
    <variation>MPVFSRAP</variation>
    <location>
        <begin position="230"/>
        <end position="237"/>
    </location>
</feature>
<feature type="sequence variant" id="VAR_043006" description="In dbSNP:rs330261." evidence="4 7">
    <original>A</original>
    <variation>T</variation>
    <location>
        <position position="41"/>
    </location>
</feature>
<feature type="sequence variant" id="VAR_043007" description="In dbSNP:rs11033639.">
    <original>P</original>
    <variation>S</variation>
    <location>
        <position position="330"/>
    </location>
</feature>
<feature type="sequence conflict" description="In Ref. 5; AAI25123." evidence="11" ref="5">
    <original>S</original>
    <variation>T</variation>
    <location>
        <position position="368"/>
    </location>
</feature>
<keyword id="KW-0025">Alternative splicing</keyword>
<keyword id="KW-0597">Phosphoprotein</keyword>
<keyword id="KW-1267">Proteomics identification</keyword>
<keyword id="KW-1185">Reference proteome</keyword>
<keyword id="KW-0734">Signal transduction inhibitor</keyword>
<keyword id="KW-0832">Ubl conjugation</keyword>
<gene>
    <name type="primary">PRR5L</name>
    <name type="synonym">PROTOR2</name>
</gene>
<sequence length="368" mass="40836">MTRGFAPILPVEFHKMGSFRRPRPRFMSSPVLSDLPRFQAARQALQLSSSSAWNSVQTAVINVFKGGGLQSNELYALNENIRRLLKSELGSFITDYFQNQLLAKGLFFVEEKIKLCEGENRIEVLAEVWDHFFTETLPTLQAIFYPVQGQELTIRQISLLGFRDLVLLKVKLGDLLLLAQSKLPSSIVQMLLILQSVHEPTGPSESYLQLEELVKQVVSPFLGISGDRSFSGPTYTLARRHSRVRPKVTVLNYASPITAVSRPLNEMVLTPLTEQEGEAYLEKCGSVRRHTVANAHSDIQLLAMATMMHSGLGEEASSENKCLLLPPSFPPPHRQCSSEPNITDNPDGLEEGARGSQEGSELNCASLS</sequence>
<organism>
    <name type="scientific">Homo sapiens</name>
    <name type="common">Human</name>
    <dbReference type="NCBI Taxonomy" id="9606"/>
    <lineage>
        <taxon>Eukaryota</taxon>
        <taxon>Metazoa</taxon>
        <taxon>Chordata</taxon>
        <taxon>Craniata</taxon>
        <taxon>Vertebrata</taxon>
        <taxon>Euteleostomi</taxon>
        <taxon>Mammalia</taxon>
        <taxon>Eutheria</taxon>
        <taxon>Euarchontoglires</taxon>
        <taxon>Primates</taxon>
        <taxon>Haplorrhini</taxon>
        <taxon>Catarrhini</taxon>
        <taxon>Hominidae</taxon>
        <taxon>Homo</taxon>
    </lineage>
</organism>
<reference key="1">
    <citation type="journal article" date="2004" name="Nat. Genet.">
        <title>Complete sequencing and characterization of 21,243 full-length human cDNAs.</title>
        <authorList>
            <person name="Ota T."/>
            <person name="Suzuki Y."/>
            <person name="Nishikawa T."/>
            <person name="Otsuki T."/>
            <person name="Sugiyama T."/>
            <person name="Irie R."/>
            <person name="Wakamatsu A."/>
            <person name="Hayashi K."/>
            <person name="Sato H."/>
            <person name="Nagai K."/>
            <person name="Kimura K."/>
            <person name="Makita H."/>
            <person name="Sekine M."/>
            <person name="Obayashi M."/>
            <person name="Nishi T."/>
            <person name="Shibahara T."/>
            <person name="Tanaka T."/>
            <person name="Ishii S."/>
            <person name="Yamamoto J."/>
            <person name="Saito K."/>
            <person name="Kawai Y."/>
            <person name="Isono Y."/>
            <person name="Nakamura Y."/>
            <person name="Nagahari K."/>
            <person name="Murakami K."/>
            <person name="Yasuda T."/>
            <person name="Iwayanagi T."/>
            <person name="Wagatsuma M."/>
            <person name="Shiratori A."/>
            <person name="Sudo H."/>
            <person name="Hosoiri T."/>
            <person name="Kaku Y."/>
            <person name="Kodaira H."/>
            <person name="Kondo H."/>
            <person name="Sugawara M."/>
            <person name="Takahashi M."/>
            <person name="Kanda K."/>
            <person name="Yokoi T."/>
            <person name="Furuya T."/>
            <person name="Kikkawa E."/>
            <person name="Omura Y."/>
            <person name="Abe K."/>
            <person name="Kamihara K."/>
            <person name="Katsuta N."/>
            <person name="Sato K."/>
            <person name="Tanikawa M."/>
            <person name="Yamazaki M."/>
            <person name="Ninomiya K."/>
            <person name="Ishibashi T."/>
            <person name="Yamashita H."/>
            <person name="Murakawa K."/>
            <person name="Fujimori K."/>
            <person name="Tanai H."/>
            <person name="Kimata M."/>
            <person name="Watanabe M."/>
            <person name="Hiraoka S."/>
            <person name="Chiba Y."/>
            <person name="Ishida S."/>
            <person name="Ono Y."/>
            <person name="Takiguchi S."/>
            <person name="Watanabe S."/>
            <person name="Yosida M."/>
            <person name="Hotuta T."/>
            <person name="Kusano J."/>
            <person name="Kanehori K."/>
            <person name="Takahashi-Fujii A."/>
            <person name="Hara H."/>
            <person name="Tanase T.-O."/>
            <person name="Nomura Y."/>
            <person name="Togiya S."/>
            <person name="Komai F."/>
            <person name="Hara R."/>
            <person name="Takeuchi K."/>
            <person name="Arita M."/>
            <person name="Imose N."/>
            <person name="Musashino K."/>
            <person name="Yuuki H."/>
            <person name="Oshima A."/>
            <person name="Sasaki N."/>
            <person name="Aotsuka S."/>
            <person name="Yoshikawa Y."/>
            <person name="Matsunawa H."/>
            <person name="Ichihara T."/>
            <person name="Shiohata N."/>
            <person name="Sano S."/>
            <person name="Moriya S."/>
            <person name="Momiyama H."/>
            <person name="Satoh N."/>
            <person name="Takami S."/>
            <person name="Terashima Y."/>
            <person name="Suzuki O."/>
            <person name="Nakagawa S."/>
            <person name="Senoh A."/>
            <person name="Mizoguchi H."/>
            <person name="Goto Y."/>
            <person name="Shimizu F."/>
            <person name="Wakebe H."/>
            <person name="Hishigaki H."/>
            <person name="Watanabe T."/>
            <person name="Sugiyama A."/>
            <person name="Takemoto M."/>
            <person name="Kawakami B."/>
            <person name="Yamazaki M."/>
            <person name="Watanabe K."/>
            <person name="Kumagai A."/>
            <person name="Itakura S."/>
            <person name="Fukuzumi Y."/>
            <person name="Fujimori Y."/>
            <person name="Komiyama M."/>
            <person name="Tashiro H."/>
            <person name="Tanigami A."/>
            <person name="Fujiwara T."/>
            <person name="Ono T."/>
            <person name="Yamada K."/>
            <person name="Fujii Y."/>
            <person name="Ozaki K."/>
            <person name="Hirao M."/>
            <person name="Ohmori Y."/>
            <person name="Kawabata A."/>
            <person name="Hikiji T."/>
            <person name="Kobatake N."/>
            <person name="Inagaki H."/>
            <person name="Ikema Y."/>
            <person name="Okamoto S."/>
            <person name="Okitani R."/>
            <person name="Kawakami T."/>
            <person name="Noguchi S."/>
            <person name="Itoh T."/>
            <person name="Shigeta K."/>
            <person name="Senba T."/>
            <person name="Matsumura K."/>
            <person name="Nakajima Y."/>
            <person name="Mizuno T."/>
            <person name="Morinaga M."/>
            <person name="Sasaki M."/>
            <person name="Togashi T."/>
            <person name="Oyama M."/>
            <person name="Hata H."/>
            <person name="Watanabe M."/>
            <person name="Komatsu T."/>
            <person name="Mizushima-Sugano J."/>
            <person name="Satoh T."/>
            <person name="Shirai Y."/>
            <person name="Takahashi Y."/>
            <person name="Nakagawa K."/>
            <person name="Okumura K."/>
            <person name="Nagase T."/>
            <person name="Nomura N."/>
            <person name="Kikuchi H."/>
            <person name="Masuho Y."/>
            <person name="Yamashita R."/>
            <person name="Nakai K."/>
            <person name="Yada T."/>
            <person name="Nakamura Y."/>
            <person name="Ohara O."/>
            <person name="Isogai T."/>
            <person name="Sugano S."/>
        </authorList>
    </citation>
    <scope>NUCLEOTIDE SEQUENCE [LARGE SCALE MRNA] (ISOFORM 3)</scope>
</reference>
<reference key="2">
    <citation type="submission" date="2005-05" db="EMBL/GenBank/DDBJ databases">
        <title>High-throughput cloning of full-length human cDNAs directly from cDNA libraries optimized for large and rare transcripts.</title>
        <authorList>
            <person name="Birkett C."/>
            <person name="Cho J."/>
            <person name="Gau Y."/>
            <person name="Hamer R."/>
            <person name="Kelly S."/>
            <person name="Kovacs K."/>
            <person name="Liu L."/>
            <person name="Liu X."/>
            <person name="Porter J."/>
            <person name="Sachs A."/>
            <person name="Shu Y."/>
            <person name="Sun Z."/>
            <person name="Wong J."/>
            <person name="Wu M."/>
            <person name="Zhang X."/>
            <person name="Jay G."/>
            <person name="He W."/>
        </authorList>
    </citation>
    <scope>NUCLEOTIDE SEQUENCE [LARGE SCALE MRNA] (ISOFORM 4)</scope>
    <scope>VARIANT THR-41</scope>
    <source>
        <tissue>Fetal brain</tissue>
    </source>
</reference>
<reference key="3">
    <citation type="journal article" date="2007" name="BMC Genomics">
        <title>The full-ORF clone resource of the German cDNA consortium.</title>
        <authorList>
            <person name="Bechtel S."/>
            <person name="Rosenfelder H."/>
            <person name="Duda A."/>
            <person name="Schmidt C.P."/>
            <person name="Ernst U."/>
            <person name="Wellenreuther R."/>
            <person name="Mehrle A."/>
            <person name="Schuster C."/>
            <person name="Bahr A."/>
            <person name="Bloecker H."/>
            <person name="Heubner D."/>
            <person name="Hoerlein A."/>
            <person name="Michel G."/>
            <person name="Wedler H."/>
            <person name="Koehrer K."/>
            <person name="Ottenwaelder B."/>
            <person name="Poustka A."/>
            <person name="Wiemann S."/>
            <person name="Schupp I."/>
        </authorList>
    </citation>
    <scope>NUCLEOTIDE SEQUENCE [LARGE SCALE MRNA] (ISOFORM 1)</scope>
    <scope>VARIANT THR-41</scope>
    <source>
        <tissue>Uterus</tissue>
    </source>
</reference>
<reference key="4">
    <citation type="journal article" date="2006" name="Nature">
        <title>Human chromosome 11 DNA sequence and analysis including novel gene identification.</title>
        <authorList>
            <person name="Taylor T.D."/>
            <person name="Noguchi H."/>
            <person name="Totoki Y."/>
            <person name="Toyoda A."/>
            <person name="Kuroki Y."/>
            <person name="Dewar K."/>
            <person name="Lloyd C."/>
            <person name="Itoh T."/>
            <person name="Takeda T."/>
            <person name="Kim D.-W."/>
            <person name="She X."/>
            <person name="Barlow K.F."/>
            <person name="Bloom T."/>
            <person name="Bruford E."/>
            <person name="Chang J.L."/>
            <person name="Cuomo C.A."/>
            <person name="Eichler E."/>
            <person name="FitzGerald M.G."/>
            <person name="Jaffe D.B."/>
            <person name="LaButti K."/>
            <person name="Nicol R."/>
            <person name="Park H.-S."/>
            <person name="Seaman C."/>
            <person name="Sougnez C."/>
            <person name="Yang X."/>
            <person name="Zimmer A.R."/>
            <person name="Zody M.C."/>
            <person name="Birren B.W."/>
            <person name="Nusbaum C."/>
            <person name="Fujiyama A."/>
            <person name="Hattori M."/>
            <person name="Rogers J."/>
            <person name="Lander E.S."/>
            <person name="Sakaki Y."/>
        </authorList>
    </citation>
    <scope>NUCLEOTIDE SEQUENCE [LARGE SCALE GENOMIC DNA]</scope>
</reference>
<reference key="5">
    <citation type="submission" date="2005-09" db="EMBL/GenBank/DDBJ databases">
        <authorList>
            <person name="Mural R.J."/>
            <person name="Istrail S."/>
            <person name="Sutton G.G."/>
            <person name="Florea L."/>
            <person name="Halpern A.L."/>
            <person name="Mobarry C.M."/>
            <person name="Lippert R."/>
            <person name="Walenz B."/>
            <person name="Shatkay H."/>
            <person name="Dew I."/>
            <person name="Miller J.R."/>
            <person name="Flanigan M.J."/>
            <person name="Edwards N.J."/>
            <person name="Bolanos R."/>
            <person name="Fasulo D."/>
            <person name="Halldorsson B.V."/>
            <person name="Hannenhalli S."/>
            <person name="Turner R."/>
            <person name="Yooseph S."/>
            <person name="Lu F."/>
            <person name="Nusskern D.R."/>
            <person name="Shue B.C."/>
            <person name="Zheng X.H."/>
            <person name="Zhong F."/>
            <person name="Delcher A.L."/>
            <person name="Huson D.H."/>
            <person name="Kravitz S.A."/>
            <person name="Mouchard L."/>
            <person name="Reinert K."/>
            <person name="Remington K.A."/>
            <person name="Clark A.G."/>
            <person name="Waterman M.S."/>
            <person name="Eichler E.E."/>
            <person name="Adams M.D."/>
            <person name="Hunkapiller M.W."/>
            <person name="Myers E.W."/>
            <person name="Venter J.C."/>
        </authorList>
    </citation>
    <scope>NUCLEOTIDE SEQUENCE [LARGE SCALE GENOMIC DNA]</scope>
</reference>
<reference key="6">
    <citation type="journal article" date="2004" name="Genome Res.">
        <title>The status, quality, and expansion of the NIH full-length cDNA project: the Mammalian Gene Collection (MGC).</title>
        <authorList>
            <consortium name="The MGC Project Team"/>
        </authorList>
    </citation>
    <scope>NUCLEOTIDE SEQUENCE [LARGE SCALE MRNA] (ISOFORM 2)</scope>
    <source>
        <tissue>Uterus</tissue>
    </source>
</reference>
<reference key="7">
    <citation type="journal article" date="2007" name="Biochem. J.">
        <title>Identification of Protor as a novel Rictor-binding component of mTOR complex-2.</title>
        <authorList>
            <person name="Pearce L.R."/>
            <person name="Huang X."/>
            <person name="Boudeau J."/>
            <person name="Pawlowski R."/>
            <person name="Wullschleger S."/>
            <person name="Deak M."/>
            <person name="Ibrahim A.F.M."/>
            <person name="Gourlay R."/>
            <person name="Magnuson M.A."/>
            <person name="Alessi D.R."/>
        </authorList>
    </citation>
    <scope>IDENTIFICATION</scope>
    <scope>FUNCTION</scope>
    <scope>SUBUNIT</scope>
</reference>
<reference key="8">
    <citation type="journal article" date="2012" name="Cell. Signal.">
        <title>Protor-2 interacts with tristetraprolin to regulate mRNA stability during stress.</title>
        <authorList>
            <person name="Holmes B."/>
            <person name="Artinian N."/>
            <person name="Anderson L."/>
            <person name="Martin J."/>
            <person name="Masri J."/>
            <person name="Cloninger C."/>
            <person name="Bernath A."/>
            <person name="Bashir T."/>
            <person name="Benavides-Serrato A."/>
            <person name="Gera J."/>
        </authorList>
    </citation>
    <scope>FUNCTION</scope>
    <scope>INTERACTION WITH ZFP36 AND RICTOR</scope>
</reference>
<reference key="9">
    <citation type="journal article" date="2012" name="Nat. Cell Biol.">
        <title>PRR5L degradation promotes mTORC2-mediated PKC-delta phosphorylation and cell migration downstream of Galpha12.</title>
        <authorList>
            <person name="Gan X."/>
            <person name="Wang J."/>
            <person name="Wang C."/>
            <person name="Sommer E."/>
            <person name="Kozasa T."/>
            <person name="Srinivasula S."/>
            <person name="Alessi D."/>
            <person name="Offermanns S."/>
            <person name="Simon M.I."/>
            <person name="Wu D."/>
        </authorList>
    </citation>
    <scope>FUNCTION IN MTORC2 SIGNALING</scope>
    <scope>INTERACTION WITH MTORC2 COMPLEX AND RFFL</scope>
    <scope>UBIQUITINATION BY RFFL</scope>
</reference>
<evidence type="ECO:0000250" key="1">
    <source>
        <dbReference type="UniProtKB" id="A2AVJ5"/>
    </source>
</evidence>
<evidence type="ECO:0000256" key="2">
    <source>
        <dbReference type="SAM" id="MobiDB-lite"/>
    </source>
</evidence>
<evidence type="ECO:0000269" key="3">
    <source>
    </source>
</evidence>
<evidence type="ECO:0000269" key="4">
    <source>
    </source>
</evidence>
<evidence type="ECO:0000269" key="5">
    <source>
    </source>
</evidence>
<evidence type="ECO:0000269" key="6">
    <source>
    </source>
</evidence>
<evidence type="ECO:0000269" key="7">
    <source ref="2"/>
</evidence>
<evidence type="ECO:0000303" key="8">
    <source>
    </source>
</evidence>
<evidence type="ECO:0000303" key="9">
    <source>
    </source>
</evidence>
<evidence type="ECO:0000303" key="10">
    <source ref="2"/>
</evidence>
<evidence type="ECO:0000305" key="11"/>
<name>PRR5L_HUMAN</name>
<protein>
    <recommendedName>
        <fullName>Proline-rich protein 5-like</fullName>
    </recommendedName>
    <alternativeName>
        <fullName>Protein observed with Rictor-2</fullName>
        <shortName>Protor-2</shortName>
    </alternativeName>
</protein>
<comment type="function">
    <text evidence="3 5 6">Associates with the mTORC2 complex that regulates cellular processes including survival and organization of the cytoskeleton (PubMed:17461779). Regulates the activity of the mTORC2 complex in a substrate-specific manner preventing for instance the specific phosphorylation of PKCs and thereby controlling cell migration (PubMed:22609986). Plays a role in the stimulation of ZFP36-mediated mRNA decay of several ZFP36-associated mRNAs, such as TNF-alpha and GM-CSF, in response to stress (PubMed:21964062). Required for ZFP36 localization to cytoplasmic stress granule (SG) and P-body (PB) in response to stress (PubMed:21964062).</text>
</comment>
<comment type="subunit">
    <text evidence="3 5 6">Interacts with the mammalian target of rapamycin complex 2 (mTORC2) which contains MTOR, MLST8, PRR5, RICTOR, MAPKAP1 and DEPTOR (PubMed:17461779). Interacts with RFFL (PubMed:22609986). Interacts (via C-terminus) with ZFP36 (via C-terminus); this interaction may accelerate ZFP36-mediated mRNA decay during stress (PubMed:21964062). Interacts with RICTOR (PubMed:21964062).</text>
</comment>
<comment type="interaction">
    <interactant intactId="EBI-1567866">
        <id>Q6MZQ0</id>
    </interactant>
    <interactant intactId="EBI-12012082">
        <id>Q7Z6B0-2</id>
        <label>CCDC91</label>
    </interactant>
    <organismsDiffer>false</organismsDiffer>
    <experiments>3</experiments>
</comment>
<comment type="interaction">
    <interactant intactId="EBI-1567866">
        <id>Q6MZQ0</id>
    </interactant>
    <interactant intactId="EBI-743105">
        <id>Q5JVL4</id>
        <label>EFHC1</label>
    </interactant>
    <organismsDiffer>false</organismsDiffer>
    <experiments>3</experiments>
</comment>
<comment type="interaction">
    <interactant intactId="EBI-1567866">
        <id>Q6MZQ0</id>
    </interactant>
    <interactant intactId="EBI-701903">
        <id>Q14192</id>
        <label>FHL2</label>
    </interactant>
    <organismsDiffer>false</organismsDiffer>
    <experiments>3</experiments>
</comment>
<comment type="interaction">
    <interactant intactId="EBI-1567866">
        <id>Q6MZQ0</id>
    </interactant>
    <interactant intactId="EBI-741101">
        <id>Q13643</id>
        <label>FHL3</label>
    </interactant>
    <organismsDiffer>false</organismsDiffer>
    <experiments>3</experiments>
</comment>
<comment type="interaction">
    <interactant intactId="EBI-1567866">
        <id>Q6MZQ0</id>
    </interactant>
    <interactant intactId="EBI-7116203">
        <id>O75031</id>
        <label>HSF2BP</label>
    </interactant>
    <organismsDiffer>false</organismsDiffer>
    <experiments>3</experiments>
</comment>
<comment type="interaction">
    <interactant intactId="EBI-1567866">
        <id>Q6MZQ0</id>
    </interactant>
    <interactant intactId="EBI-2556193">
        <id>Q63ZY3</id>
        <label>KANK2</label>
    </interactant>
    <organismsDiffer>false</organismsDiffer>
    <experiments>3</experiments>
</comment>
<comment type="interaction">
    <interactant intactId="EBI-1567866">
        <id>Q6MZQ0</id>
    </interactant>
    <interactant intactId="EBI-77889">
        <id>Q9UI95</id>
        <label>MAD2L2</label>
    </interactant>
    <organismsDiffer>false</organismsDiffer>
    <experiments>3</experiments>
</comment>
<comment type="interaction">
    <interactant intactId="EBI-1567866">
        <id>Q6MZQ0</id>
    </interactant>
    <interactant intactId="EBI-2555085">
        <id>Q8IVT2</id>
        <label>MISP</label>
    </interactant>
    <organismsDiffer>false</organismsDiffer>
    <experiments>3</experiments>
</comment>
<comment type="interaction">
    <interactant intactId="EBI-1567866">
        <id>Q6MZQ0</id>
    </interactant>
    <interactant intactId="EBI-744248">
        <id>P40692</id>
        <label>MLH1</label>
    </interactant>
    <organismsDiffer>false</organismsDiffer>
    <experiments>3</experiments>
</comment>
<comment type="interaction">
    <interactant intactId="EBI-1567866">
        <id>Q6MZQ0</id>
    </interactant>
    <interactant intactId="EBI-9675802">
        <id>Q6PF18</id>
        <label>MORN3</label>
    </interactant>
    <organismsDiffer>false</organismsDiffer>
    <experiments>3</experiments>
</comment>
<comment type="interaction">
    <interactant intactId="EBI-1567866">
        <id>Q6MZQ0</id>
    </interactant>
    <interactant intactId="EBI-946080">
        <id>Q9BSU1</id>
        <label>PHAF1</label>
    </interactant>
    <organismsDiffer>false</organismsDiffer>
    <experiments>3</experiments>
</comment>
<comment type="interaction">
    <interactant intactId="EBI-1567866">
        <id>Q6MZQ0</id>
    </interactant>
    <interactant intactId="EBI-748391">
        <id>Q9BWG6</id>
        <label>SCNM1</label>
    </interactant>
    <organismsDiffer>false</organismsDiffer>
    <experiments>3</experiments>
</comment>
<comment type="interaction">
    <interactant intactId="EBI-1567866">
        <id>Q6MZQ0</id>
    </interactant>
    <interactant intactId="EBI-743272">
        <id>O75604</id>
        <label>USP2</label>
    </interactant>
    <organismsDiffer>false</organismsDiffer>
    <experiments>3</experiments>
</comment>
<comment type="interaction">
    <interactant intactId="EBI-1567866">
        <id>Q6MZQ0</id>
    </interactant>
    <interactant intactId="EBI-12030590">
        <id>Q9H0C1</id>
        <label>ZMYND12</label>
    </interactant>
    <organismsDiffer>false</organismsDiffer>
    <experiments>3</experiments>
</comment>
<comment type="alternative products">
    <event type="alternative splicing"/>
    <isoform>
        <id>Q6MZQ0-1</id>
        <name>1</name>
        <sequence type="displayed"/>
    </isoform>
    <isoform>
        <id>Q6MZQ0-2</id>
        <name>2</name>
        <sequence type="described" ref="VSP_033375 VSP_033379"/>
    </isoform>
    <isoform>
        <id>Q6MZQ0-3</id>
        <name>3</name>
        <sequence type="described" ref="VSP_033376 VSP_033377 VSP_033378"/>
    </isoform>
    <isoform>
        <id>Q6MZQ0-4</id>
        <name>4</name>
        <sequence type="described" ref="VSP_044981 VSP_044982"/>
    </isoform>
</comment>
<comment type="PTM">
    <text evidence="6">Ubiquitinated. Ubiquitination by RFFL promotes proteasomal degradation of PRR5L thereby modifying the substrate-specific activity of the mTORC2 complex. Ubiquitination by RFFL is stimulated by LPA/lysophosphatidic acid.</text>
</comment>
<comment type="similarity">
    <text evidence="11">Belongs to the PROTOR family.</text>
</comment>
<comment type="sequence caution" evidence="11">
    <conflict type="erroneous initiation">
        <sequence resource="EMBL-CDS" id="AAI25123"/>
    </conflict>
    <text>Extended N-terminus.</text>
</comment>
<accession>Q6MZQ0</accession>
<accession>A4QN22</accession>
<accession>E9PKY1</accession>
<accession>Q96H46</accession>
<accession>Q9H7V4</accession>
<proteinExistence type="evidence at protein level"/>